<accession>Q05904</accession>
<keyword id="KW-1015">Disulfide bond</keyword>
<keyword id="KW-0677">Repeat</keyword>
<keyword id="KW-0964">Secreted</keyword>
<keyword id="KW-0732">Signal</keyword>
<name>SM34_LYTPI</name>
<evidence type="ECO:0000255" key="1"/>
<evidence type="ECO:0000255" key="2">
    <source>
        <dbReference type="PROSITE-ProRule" id="PRU00040"/>
    </source>
</evidence>
<evidence type="ECO:0000256" key="3">
    <source>
        <dbReference type="SAM" id="MobiDB-lite"/>
    </source>
</evidence>
<evidence type="ECO:0000305" key="4"/>
<reference key="1">
    <citation type="journal article" date="1991" name="Dev. Biol.">
        <title>Characterization of a cDNA encoding a protein involved in formation of the skeleton during development of the sea urchin Lytechinus pictus.</title>
        <authorList>
            <person name="Livingston B.T."/>
            <person name="Shaw R."/>
            <person name="Bailey A."/>
            <person name="Wilt F."/>
        </authorList>
    </citation>
    <scope>NUCLEOTIDE SEQUENCE [MRNA]</scope>
    <source>
        <tissue>Embryo</tissue>
    </source>
</reference>
<comment type="function">
    <text>Major matrix protein of the sea urchin embryo spicule which directs crystal growth in certain orientations and inhibit growth in others.</text>
</comment>
<comment type="subcellular location">
    <subcellularLocation>
        <location>Secreted</location>
    </subcellularLocation>
</comment>
<comment type="tissue specificity">
    <text>Embryo spicule.</text>
</comment>
<comment type="domain">
    <text>The repetitive domain may provide a calcite binding matrix.</text>
</comment>
<comment type="similarity">
    <text evidence="4">Belongs to the SM50 family.</text>
</comment>
<sequence>MKGLLLILASLVAIATGQDCPAYYVRSSSGASCYRYFNIRVLHRMASEFCEMVTPCGNGPSRMGALASISSPIENHEVYRMVASFSQDNQMENEAWLGWNTQSPRFWEDGTPAYPNGFAGFHQSGSYTSWPSWRPGMPTSGWPVNPANPWTPPPGRAPVMKGQHVTPQQPGQRPNLGPEWDLVEATAMRAFVCEVAAGQNIPPGQQPGFGGQQPGFGGRQPGFGGQQPGFGQQPGFGGRQPGFGGRQPGFGGQQPGFGGQQPGFGGQQPGFGGQQPGFGGQQPGFGGQQPGFGGQQPGFGGGPQRPGMGGQPNSPNPRFNRPRMLQEAETDVTGS</sequence>
<dbReference type="EMBL" id="X59616">
    <property type="protein sequence ID" value="CAA42179.1"/>
    <property type="molecule type" value="mRNA"/>
</dbReference>
<dbReference type="PIR" id="A43900">
    <property type="entry name" value="A43900"/>
</dbReference>
<dbReference type="SMR" id="Q05904"/>
<dbReference type="GO" id="GO:0005576">
    <property type="term" value="C:extracellular region"/>
    <property type="evidence" value="ECO:0007669"/>
    <property type="project" value="UniProtKB-SubCell"/>
</dbReference>
<dbReference type="Gene3D" id="3.10.100.10">
    <property type="entry name" value="Mannose-Binding Protein A, subunit A"/>
    <property type="match status" value="1"/>
</dbReference>
<dbReference type="InterPro" id="IPR001304">
    <property type="entry name" value="C-type_lectin-like"/>
</dbReference>
<dbReference type="InterPro" id="IPR016186">
    <property type="entry name" value="C-type_lectin-like/link_sf"/>
</dbReference>
<dbReference type="InterPro" id="IPR016187">
    <property type="entry name" value="CTDL_fold"/>
</dbReference>
<dbReference type="InterPro" id="IPR052890">
    <property type="entry name" value="SM50_spicule_matrix"/>
</dbReference>
<dbReference type="PANTHER" id="PTHR36148:SF3">
    <property type="entry name" value="50 KDA SPICULE MATRIX PROTEIN"/>
    <property type="match status" value="1"/>
</dbReference>
<dbReference type="PANTHER" id="PTHR36148">
    <property type="entry name" value="50 KDA SPICULE MATRIX PROTEIN-RELATED"/>
    <property type="match status" value="1"/>
</dbReference>
<dbReference type="SUPFAM" id="SSF56436">
    <property type="entry name" value="C-type lectin-like"/>
    <property type="match status" value="1"/>
</dbReference>
<dbReference type="PROSITE" id="PS50041">
    <property type="entry name" value="C_TYPE_LECTIN_2"/>
    <property type="match status" value="1"/>
</dbReference>
<proteinExistence type="evidence at transcript level"/>
<organism>
    <name type="scientific">Lytechinus pictus</name>
    <name type="common">Painted sea urchin</name>
    <dbReference type="NCBI Taxonomy" id="7653"/>
    <lineage>
        <taxon>Eukaryota</taxon>
        <taxon>Metazoa</taxon>
        <taxon>Echinodermata</taxon>
        <taxon>Eleutherozoa</taxon>
        <taxon>Echinozoa</taxon>
        <taxon>Echinoidea</taxon>
        <taxon>Euechinoidea</taxon>
        <taxon>Echinacea</taxon>
        <taxon>Temnopleuroida</taxon>
        <taxon>Toxopneustidae</taxon>
        <taxon>Lytechinus</taxon>
    </lineage>
</organism>
<feature type="signal peptide" evidence="1">
    <location>
        <begin position="1"/>
        <end position="17"/>
    </location>
</feature>
<feature type="chain" id="PRO_0000017562" description="34 kDa spicule matrix protein">
    <location>
        <begin position="18"/>
        <end position="335"/>
    </location>
</feature>
<feature type="domain" description="C-type lectin" evidence="2">
    <location>
        <begin position="29"/>
        <end position="194"/>
    </location>
</feature>
<feature type="region of interest" description="Disordered" evidence="3">
    <location>
        <begin position="199"/>
        <end position="335"/>
    </location>
</feature>
<feature type="compositionally biased region" description="Gly residues" evidence="3">
    <location>
        <begin position="207"/>
        <end position="310"/>
    </location>
</feature>
<feature type="compositionally biased region" description="Low complexity" evidence="3">
    <location>
        <begin position="311"/>
        <end position="323"/>
    </location>
</feature>
<feature type="disulfide bond" evidence="2">
    <location>
        <begin position="50"/>
        <end position="193"/>
    </location>
</feature>
<protein>
    <recommendedName>
        <fullName>34 kDa spicule matrix protein</fullName>
    </recommendedName>
    <alternativeName>
        <fullName>LSM34</fullName>
    </alternativeName>
</protein>